<sequence length="270" mass="30594">MAQAEGAYHRPLATSRLELNLVRLLCRCESMAAEKREPDEWRLEKYVGALEDMLQALKVQASKPASEVISEYSRKVDFLKGMLQAEKLTSSSEKALANQFLAPGRVPTTAKERVPATKTVHLQSRARYTSEMRSELLGMEPSGECEVDMRKRAAKGSRPADERQSASELDLVLQRHQGLQEKLAEEMLGLARSLKTNTLAAQSVIKKDNQTLSHSLKMADQNLEKLKLESERLEQHAQKSVNWLLWAMLIVVCFVFISMILFIRIMPRLK</sequence>
<dbReference type="EMBL" id="AF353245">
    <property type="protein sequence ID" value="AAK26661.1"/>
    <property type="molecule type" value="mRNA"/>
</dbReference>
<dbReference type="EMBL" id="AK008573">
    <property type="protein sequence ID" value="BAB25752.1"/>
    <property type="molecule type" value="mRNA"/>
</dbReference>
<dbReference type="EMBL" id="AK012490">
    <property type="protein sequence ID" value="BAB28275.1"/>
    <property type="molecule type" value="mRNA"/>
</dbReference>
<dbReference type="EMBL" id="AK160726">
    <property type="protein sequence ID" value="BAE35971.1"/>
    <property type="molecule type" value="mRNA"/>
</dbReference>
<dbReference type="EMBL" id="BC038519">
    <property type="protein sequence ID" value="AAH38519.1"/>
    <property type="molecule type" value="mRNA"/>
</dbReference>
<dbReference type="EMBL" id="BC075695">
    <property type="protein sequence ID" value="AAH75695.1"/>
    <property type="molecule type" value="mRNA"/>
</dbReference>
<dbReference type="CCDS" id="CCDS22390.1">
    <molecule id="Q9CQ56-1"/>
</dbReference>
<dbReference type="RefSeq" id="NP_001139252.1">
    <property type="nucleotide sequence ID" value="NM_001145780.1"/>
</dbReference>
<dbReference type="RefSeq" id="NP_080193.1">
    <molecule id="Q9CQ56-1"/>
    <property type="nucleotide sequence ID" value="NM_025917.4"/>
</dbReference>
<dbReference type="SMR" id="Q9CQ56"/>
<dbReference type="BioGRID" id="211882">
    <property type="interactions" value="6"/>
</dbReference>
<dbReference type="FunCoup" id="Q9CQ56">
    <property type="interactions" value="2709"/>
</dbReference>
<dbReference type="STRING" id="10090.ENSMUSP00000105680"/>
<dbReference type="iPTMnet" id="Q9CQ56"/>
<dbReference type="PhosphoSitePlus" id="Q9CQ56"/>
<dbReference type="PaxDb" id="10090-ENSMUSP00000019169"/>
<dbReference type="ProteomicsDB" id="297971">
    <molecule id="Q9CQ56-1"/>
</dbReference>
<dbReference type="ProteomicsDB" id="297972">
    <molecule id="Q9CQ56-2"/>
</dbReference>
<dbReference type="Pumba" id="Q9CQ56"/>
<dbReference type="Antibodypedia" id="7758">
    <property type="antibodies" value="219 antibodies from 27 providers"/>
</dbReference>
<dbReference type="DNASU" id="67023"/>
<dbReference type="Ensembl" id="ENSMUST00000019169.8">
    <molecule id="Q9CQ56-1"/>
    <property type="protein sequence ID" value="ENSMUSP00000019169.8"/>
    <property type="gene ID" value="ENSMUSG00000002395.15"/>
</dbReference>
<dbReference type="Ensembl" id="ENSMUST00000110054.8">
    <molecule id="Q9CQ56-1"/>
    <property type="protein sequence ID" value="ENSMUSP00000105681.2"/>
    <property type="gene ID" value="ENSMUSG00000002395.15"/>
</dbReference>
<dbReference type="GeneID" id="67023"/>
<dbReference type="KEGG" id="mmu:67023"/>
<dbReference type="UCSC" id="uc009mcp.2">
    <molecule id="Q9CQ56-1"/>
    <property type="organism name" value="mouse"/>
</dbReference>
<dbReference type="UCSC" id="uc009mcs.2">
    <molecule id="Q9CQ56-2"/>
    <property type="organism name" value="mouse"/>
</dbReference>
<dbReference type="AGR" id="MGI:1914273"/>
<dbReference type="CTD" id="55850"/>
<dbReference type="MGI" id="MGI:1914273">
    <property type="gene designation" value="Use1"/>
</dbReference>
<dbReference type="VEuPathDB" id="HostDB:ENSMUSG00000002395"/>
<dbReference type="eggNOG" id="KOG2678">
    <property type="taxonomic scope" value="Eukaryota"/>
</dbReference>
<dbReference type="GeneTree" id="ENSGT00390000014361"/>
<dbReference type="HOGENOM" id="CLU_087320_0_0_1"/>
<dbReference type="InParanoid" id="Q9CQ56"/>
<dbReference type="OMA" id="KYYTNAQ"/>
<dbReference type="OrthoDB" id="4506189at2759"/>
<dbReference type="PhylomeDB" id="Q9CQ56"/>
<dbReference type="TreeFam" id="TF325006"/>
<dbReference type="Reactome" id="R-MMU-6811434">
    <property type="pathway name" value="COPI-dependent Golgi-to-ER retrograde traffic"/>
</dbReference>
<dbReference type="BioGRID-ORCS" id="67023">
    <property type="hits" value="9 hits in 78 CRISPR screens"/>
</dbReference>
<dbReference type="ChiTaRS" id="Use1">
    <property type="organism name" value="mouse"/>
</dbReference>
<dbReference type="PRO" id="PR:Q9CQ56"/>
<dbReference type="Proteomes" id="UP000000589">
    <property type="component" value="Chromosome 8"/>
</dbReference>
<dbReference type="RNAct" id="Q9CQ56">
    <property type="molecule type" value="protein"/>
</dbReference>
<dbReference type="Bgee" id="ENSMUSG00000002395">
    <property type="expression patterns" value="Expressed in skin of snout and 270 other cell types or tissues"/>
</dbReference>
<dbReference type="ExpressionAtlas" id="Q9CQ56">
    <property type="expression patterns" value="baseline and differential"/>
</dbReference>
<dbReference type="GO" id="GO:0030137">
    <property type="term" value="C:COPI-coated vesicle"/>
    <property type="evidence" value="ECO:0007669"/>
    <property type="project" value="Ensembl"/>
</dbReference>
<dbReference type="GO" id="GO:0005789">
    <property type="term" value="C:endoplasmic reticulum membrane"/>
    <property type="evidence" value="ECO:0007669"/>
    <property type="project" value="UniProtKB-SubCell"/>
</dbReference>
<dbReference type="GO" id="GO:0031201">
    <property type="term" value="C:SNARE complex"/>
    <property type="evidence" value="ECO:0007669"/>
    <property type="project" value="Ensembl"/>
</dbReference>
<dbReference type="GO" id="GO:0007029">
    <property type="term" value="P:endoplasmic reticulum organization"/>
    <property type="evidence" value="ECO:0000315"/>
    <property type="project" value="MGI"/>
</dbReference>
<dbReference type="GO" id="GO:0071786">
    <property type="term" value="P:endoplasmic reticulum tubular network organization"/>
    <property type="evidence" value="ECO:0000315"/>
    <property type="project" value="MGI"/>
</dbReference>
<dbReference type="GO" id="GO:0015031">
    <property type="term" value="P:protein transport"/>
    <property type="evidence" value="ECO:0007669"/>
    <property type="project" value="UniProtKB-KW"/>
</dbReference>
<dbReference type="GO" id="GO:0060628">
    <property type="term" value="P:regulation of ER to Golgi vesicle-mediated transport"/>
    <property type="evidence" value="ECO:0000315"/>
    <property type="project" value="MGI"/>
</dbReference>
<dbReference type="GO" id="GO:0016192">
    <property type="term" value="P:vesicle-mediated transport"/>
    <property type="evidence" value="ECO:0007669"/>
    <property type="project" value="UniProtKB-KW"/>
</dbReference>
<dbReference type="CDD" id="cd15860">
    <property type="entry name" value="SNARE_USE1"/>
    <property type="match status" value="1"/>
</dbReference>
<dbReference type="InterPro" id="IPR019150">
    <property type="entry name" value="Vesicle_transport_protein_Use1"/>
</dbReference>
<dbReference type="PANTHER" id="PTHR13050">
    <property type="entry name" value="USE1-LIKE PROTEIN"/>
    <property type="match status" value="1"/>
</dbReference>
<dbReference type="PANTHER" id="PTHR13050:SF10">
    <property type="entry name" value="VESICLE TRANSPORT PROTEIN USE1"/>
    <property type="match status" value="1"/>
</dbReference>
<dbReference type="Pfam" id="PF09753">
    <property type="entry name" value="Use1"/>
    <property type="match status" value="1"/>
</dbReference>
<keyword id="KW-0025">Alternative splicing</keyword>
<keyword id="KW-0175">Coiled coil</keyword>
<keyword id="KW-0256">Endoplasmic reticulum</keyword>
<keyword id="KW-0931">ER-Golgi transport</keyword>
<keyword id="KW-0472">Membrane</keyword>
<keyword id="KW-0653">Protein transport</keyword>
<keyword id="KW-1185">Reference proteome</keyword>
<keyword id="KW-0812">Transmembrane</keyword>
<keyword id="KW-1133">Transmembrane helix</keyword>
<keyword id="KW-0813">Transport</keyword>
<gene>
    <name type="primary">Use1</name>
    <name type="synonym">Use1l</name>
</gene>
<protein>
    <recommendedName>
        <fullName>Vesicle transport protein USE1</fullName>
    </recommendedName>
    <alternativeName>
        <fullName>Protein D12</fullName>
    </alternativeName>
    <alternativeName>
        <fullName>USE1-like protein</fullName>
    </alternativeName>
</protein>
<reference key="1">
    <citation type="submission" date="2001-02" db="EMBL/GenBank/DDBJ databases">
        <title>Protein from cultured bone marrow mast cells.</title>
        <authorList>
            <person name="Li L."/>
            <person name="Yang Y."/>
            <person name="Stevens R.L."/>
        </authorList>
    </citation>
    <scope>NUCLEOTIDE SEQUENCE [MRNA] (ISOFORM 1)</scope>
    <source>
        <strain>BALB/cJ</strain>
        <tissue>Bone marrow</tissue>
    </source>
</reference>
<reference key="2">
    <citation type="journal article" date="2005" name="Science">
        <title>The transcriptional landscape of the mammalian genome.</title>
        <authorList>
            <person name="Carninci P."/>
            <person name="Kasukawa T."/>
            <person name="Katayama S."/>
            <person name="Gough J."/>
            <person name="Frith M.C."/>
            <person name="Maeda N."/>
            <person name="Oyama R."/>
            <person name="Ravasi T."/>
            <person name="Lenhard B."/>
            <person name="Wells C."/>
            <person name="Kodzius R."/>
            <person name="Shimokawa K."/>
            <person name="Bajic V.B."/>
            <person name="Brenner S.E."/>
            <person name="Batalov S."/>
            <person name="Forrest A.R."/>
            <person name="Zavolan M."/>
            <person name="Davis M.J."/>
            <person name="Wilming L.G."/>
            <person name="Aidinis V."/>
            <person name="Allen J.E."/>
            <person name="Ambesi-Impiombato A."/>
            <person name="Apweiler R."/>
            <person name="Aturaliya R.N."/>
            <person name="Bailey T.L."/>
            <person name="Bansal M."/>
            <person name="Baxter L."/>
            <person name="Beisel K.W."/>
            <person name="Bersano T."/>
            <person name="Bono H."/>
            <person name="Chalk A.M."/>
            <person name="Chiu K.P."/>
            <person name="Choudhary V."/>
            <person name="Christoffels A."/>
            <person name="Clutterbuck D.R."/>
            <person name="Crowe M.L."/>
            <person name="Dalla E."/>
            <person name="Dalrymple B.P."/>
            <person name="de Bono B."/>
            <person name="Della Gatta G."/>
            <person name="di Bernardo D."/>
            <person name="Down T."/>
            <person name="Engstrom P."/>
            <person name="Fagiolini M."/>
            <person name="Faulkner G."/>
            <person name="Fletcher C.F."/>
            <person name="Fukushima T."/>
            <person name="Furuno M."/>
            <person name="Futaki S."/>
            <person name="Gariboldi M."/>
            <person name="Georgii-Hemming P."/>
            <person name="Gingeras T.R."/>
            <person name="Gojobori T."/>
            <person name="Green R.E."/>
            <person name="Gustincich S."/>
            <person name="Harbers M."/>
            <person name="Hayashi Y."/>
            <person name="Hensch T.K."/>
            <person name="Hirokawa N."/>
            <person name="Hill D."/>
            <person name="Huminiecki L."/>
            <person name="Iacono M."/>
            <person name="Ikeo K."/>
            <person name="Iwama A."/>
            <person name="Ishikawa T."/>
            <person name="Jakt M."/>
            <person name="Kanapin A."/>
            <person name="Katoh M."/>
            <person name="Kawasawa Y."/>
            <person name="Kelso J."/>
            <person name="Kitamura H."/>
            <person name="Kitano H."/>
            <person name="Kollias G."/>
            <person name="Krishnan S.P."/>
            <person name="Kruger A."/>
            <person name="Kummerfeld S.K."/>
            <person name="Kurochkin I.V."/>
            <person name="Lareau L.F."/>
            <person name="Lazarevic D."/>
            <person name="Lipovich L."/>
            <person name="Liu J."/>
            <person name="Liuni S."/>
            <person name="McWilliam S."/>
            <person name="Madan Babu M."/>
            <person name="Madera M."/>
            <person name="Marchionni L."/>
            <person name="Matsuda H."/>
            <person name="Matsuzawa S."/>
            <person name="Miki H."/>
            <person name="Mignone F."/>
            <person name="Miyake S."/>
            <person name="Morris K."/>
            <person name="Mottagui-Tabar S."/>
            <person name="Mulder N."/>
            <person name="Nakano N."/>
            <person name="Nakauchi H."/>
            <person name="Ng P."/>
            <person name="Nilsson R."/>
            <person name="Nishiguchi S."/>
            <person name="Nishikawa S."/>
            <person name="Nori F."/>
            <person name="Ohara O."/>
            <person name="Okazaki Y."/>
            <person name="Orlando V."/>
            <person name="Pang K.C."/>
            <person name="Pavan W.J."/>
            <person name="Pavesi G."/>
            <person name="Pesole G."/>
            <person name="Petrovsky N."/>
            <person name="Piazza S."/>
            <person name="Reed J."/>
            <person name="Reid J.F."/>
            <person name="Ring B.Z."/>
            <person name="Ringwald M."/>
            <person name="Rost B."/>
            <person name="Ruan Y."/>
            <person name="Salzberg S.L."/>
            <person name="Sandelin A."/>
            <person name="Schneider C."/>
            <person name="Schoenbach C."/>
            <person name="Sekiguchi K."/>
            <person name="Semple C.A."/>
            <person name="Seno S."/>
            <person name="Sessa L."/>
            <person name="Sheng Y."/>
            <person name="Shibata Y."/>
            <person name="Shimada H."/>
            <person name="Shimada K."/>
            <person name="Silva D."/>
            <person name="Sinclair B."/>
            <person name="Sperling S."/>
            <person name="Stupka E."/>
            <person name="Sugiura K."/>
            <person name="Sultana R."/>
            <person name="Takenaka Y."/>
            <person name="Taki K."/>
            <person name="Tammoja K."/>
            <person name="Tan S.L."/>
            <person name="Tang S."/>
            <person name="Taylor M.S."/>
            <person name="Tegner J."/>
            <person name="Teichmann S.A."/>
            <person name="Ueda H.R."/>
            <person name="van Nimwegen E."/>
            <person name="Verardo R."/>
            <person name="Wei C.L."/>
            <person name="Yagi K."/>
            <person name="Yamanishi H."/>
            <person name="Zabarovsky E."/>
            <person name="Zhu S."/>
            <person name="Zimmer A."/>
            <person name="Hide W."/>
            <person name="Bult C."/>
            <person name="Grimmond S.M."/>
            <person name="Teasdale R.D."/>
            <person name="Liu E.T."/>
            <person name="Brusic V."/>
            <person name="Quackenbush J."/>
            <person name="Wahlestedt C."/>
            <person name="Mattick J.S."/>
            <person name="Hume D.A."/>
            <person name="Kai C."/>
            <person name="Sasaki D."/>
            <person name="Tomaru Y."/>
            <person name="Fukuda S."/>
            <person name="Kanamori-Katayama M."/>
            <person name="Suzuki M."/>
            <person name="Aoki J."/>
            <person name="Arakawa T."/>
            <person name="Iida J."/>
            <person name="Imamura K."/>
            <person name="Itoh M."/>
            <person name="Kato T."/>
            <person name="Kawaji H."/>
            <person name="Kawagashira N."/>
            <person name="Kawashima T."/>
            <person name="Kojima M."/>
            <person name="Kondo S."/>
            <person name="Konno H."/>
            <person name="Nakano K."/>
            <person name="Ninomiya N."/>
            <person name="Nishio T."/>
            <person name="Okada M."/>
            <person name="Plessy C."/>
            <person name="Shibata K."/>
            <person name="Shiraki T."/>
            <person name="Suzuki S."/>
            <person name="Tagami M."/>
            <person name="Waki K."/>
            <person name="Watahiki A."/>
            <person name="Okamura-Oho Y."/>
            <person name="Suzuki H."/>
            <person name="Kawai J."/>
            <person name="Hayashizaki Y."/>
        </authorList>
    </citation>
    <scope>NUCLEOTIDE SEQUENCE [LARGE SCALE MRNA] (ISOFORM 1)</scope>
    <source>
        <strain>C57BL/6J</strain>
        <tissue>Head</tissue>
        <tissue>Small intestine</tissue>
    </source>
</reference>
<reference key="3">
    <citation type="journal article" date="2004" name="Genome Res.">
        <title>The status, quality, and expansion of the NIH full-length cDNA project: the Mammalian Gene Collection (MGC).</title>
        <authorList>
            <consortium name="The MGC Project Team"/>
        </authorList>
    </citation>
    <scope>NUCLEOTIDE SEQUENCE [LARGE SCALE MRNA] (ISOFORMS 1 AND 2)</scope>
    <source>
        <strain>C57BL/6J</strain>
        <tissue>Brain</tissue>
        <tissue>Thymus</tissue>
    </source>
</reference>
<reference key="4">
    <citation type="journal article" date="2010" name="Cell">
        <title>A tissue-specific atlas of mouse protein phosphorylation and expression.</title>
        <authorList>
            <person name="Huttlin E.L."/>
            <person name="Jedrychowski M.P."/>
            <person name="Elias J.E."/>
            <person name="Goswami T."/>
            <person name="Rad R."/>
            <person name="Beausoleil S.A."/>
            <person name="Villen J."/>
            <person name="Haas W."/>
            <person name="Sowa M.E."/>
            <person name="Gygi S.P."/>
        </authorList>
    </citation>
    <scope>IDENTIFICATION BY MASS SPECTROMETRY [LARGE SCALE ANALYSIS]</scope>
    <source>
        <tissue>Brain</tissue>
        <tissue>Heart</tissue>
        <tissue>Liver</tissue>
        <tissue>Pancreas</tissue>
        <tissue>Spleen</tissue>
        <tissue>Testis</tissue>
    </source>
</reference>
<comment type="function">
    <text evidence="1">SNARE that may be involved in targeting and fusion of Golgi-derived retrograde transport vesicles with the ER.</text>
</comment>
<comment type="subunit">
    <text evidence="1">Component of a SNARE complex consisting of STX18, USE1L, BNIP1/SEC20L and SEC22B. Interacts directly with STX18 (By similarity).</text>
</comment>
<comment type="subcellular location">
    <subcellularLocation>
        <location evidence="1">Endoplasmic reticulum membrane</location>
        <topology evidence="1">Single-pass type IV membrane protein</topology>
    </subcellularLocation>
</comment>
<comment type="alternative products">
    <event type="alternative splicing"/>
    <isoform>
        <id>Q9CQ56-1</id>
        <name>1</name>
        <sequence type="displayed"/>
    </isoform>
    <isoform>
        <id>Q9CQ56-2</id>
        <name>2</name>
        <sequence type="described" ref="VSP_012666 VSP_012667"/>
    </isoform>
</comment>
<comment type="similarity">
    <text evidence="4">Belongs to the USE1 family.</text>
</comment>
<feature type="chain" id="PRO_0000215580" description="Vesicle transport protein USE1">
    <location>
        <begin position="1"/>
        <end position="270"/>
    </location>
</feature>
<feature type="topological domain" description="Cytoplasmic" evidence="2">
    <location>
        <begin position="1"/>
        <end position="242"/>
    </location>
</feature>
<feature type="transmembrane region" description="Helical; Anchor for type IV membrane protein" evidence="2">
    <location>
        <begin position="243"/>
        <end position="263"/>
    </location>
</feature>
<feature type="topological domain" description="Lumenal" evidence="2">
    <location>
        <begin position="264"/>
        <end position="270"/>
    </location>
</feature>
<feature type="coiled-coil region" evidence="2">
    <location>
        <begin position="206"/>
        <end position="242"/>
    </location>
</feature>
<feature type="splice variant" id="VSP_012666" description="In isoform 2." evidence="3">
    <location>
        <begin position="1"/>
        <end position="81"/>
    </location>
</feature>
<feature type="splice variant" id="VSP_012667" description="In isoform 2." evidence="3">
    <original>A</original>
    <variation>AS</variation>
    <location>
        <position position="153"/>
    </location>
</feature>
<feature type="sequence conflict" description="In Ref. 1; AAK26661." evidence="4" ref="1">
    <original>E</original>
    <variation>D</variation>
    <location>
        <position position="29"/>
    </location>
</feature>
<feature type="sequence conflict" description="In Ref. 1; AAK26661." evidence="4" ref="1">
    <original>P</original>
    <variation>L</variation>
    <location>
        <position position="38"/>
    </location>
</feature>
<feature type="sequence conflict" description="In Ref. 1; AAK26661." evidence="4" ref="1">
    <original>L</original>
    <variation>F</variation>
    <location>
        <position position="194"/>
    </location>
</feature>
<evidence type="ECO:0000250" key="1"/>
<evidence type="ECO:0000255" key="2"/>
<evidence type="ECO:0000303" key="3">
    <source>
    </source>
</evidence>
<evidence type="ECO:0000305" key="4"/>
<proteinExistence type="evidence at protein level"/>
<name>USE1_MOUSE</name>
<accession>Q9CQ56</accession>
<accession>Q3TUK0</accession>
<accession>Q80V73</accession>
<accession>Q99MB6</accession>
<organism>
    <name type="scientific">Mus musculus</name>
    <name type="common">Mouse</name>
    <dbReference type="NCBI Taxonomy" id="10090"/>
    <lineage>
        <taxon>Eukaryota</taxon>
        <taxon>Metazoa</taxon>
        <taxon>Chordata</taxon>
        <taxon>Craniata</taxon>
        <taxon>Vertebrata</taxon>
        <taxon>Euteleostomi</taxon>
        <taxon>Mammalia</taxon>
        <taxon>Eutheria</taxon>
        <taxon>Euarchontoglires</taxon>
        <taxon>Glires</taxon>
        <taxon>Rodentia</taxon>
        <taxon>Myomorpha</taxon>
        <taxon>Muroidea</taxon>
        <taxon>Muridae</taxon>
        <taxon>Murinae</taxon>
        <taxon>Mus</taxon>
        <taxon>Mus</taxon>
    </lineage>
</organism>